<keyword id="KW-0472">Membrane</keyword>
<keyword id="KW-0489">Methyltransferase</keyword>
<keyword id="KW-0496">Mitochondrion</keyword>
<keyword id="KW-0999">Mitochondrion inner membrane</keyword>
<keyword id="KW-1185">Reference proteome</keyword>
<keyword id="KW-0949">S-adenosyl-L-methionine</keyword>
<keyword id="KW-0808">Transferase</keyword>
<keyword id="KW-0809">Transit peptide</keyword>
<keyword id="KW-0831">Ubiquinone biosynthesis</keyword>
<evidence type="ECO:0000255" key="1">
    <source>
        <dbReference type="HAMAP-Rule" id="MF_03191"/>
    </source>
</evidence>
<accession>Q5ZLL5</accession>
<comment type="function">
    <text evidence="1">Methyltransferase required for the conversion of 2-polyprenyl-6-methoxy-1,4-benzoquinol (DDMQH2) to 2-polyprenyl-3-methyl-6-methoxy-1,4-benzoquinol (DMQH2).</text>
</comment>
<comment type="catalytic activity">
    <reaction evidence="1">
        <text>a 2-methoxy-6-(all-trans-polyprenyl)benzene-1,4-diol + S-adenosyl-L-methionine = a 5-methoxy-2-methyl-3-(all-trans-polyprenyl)benzene-1,4-diol + S-adenosyl-L-homocysteine + H(+)</text>
        <dbReference type="Rhea" id="RHEA:28286"/>
        <dbReference type="Rhea" id="RHEA-COMP:10858"/>
        <dbReference type="Rhea" id="RHEA-COMP:10859"/>
        <dbReference type="ChEBI" id="CHEBI:15378"/>
        <dbReference type="ChEBI" id="CHEBI:57856"/>
        <dbReference type="ChEBI" id="CHEBI:59789"/>
        <dbReference type="ChEBI" id="CHEBI:84166"/>
        <dbReference type="ChEBI" id="CHEBI:84167"/>
        <dbReference type="EC" id="2.1.1.201"/>
    </reaction>
</comment>
<comment type="pathway">
    <text evidence="1">Cofactor biosynthesis; ubiquinone biosynthesis.</text>
</comment>
<comment type="subunit">
    <text evidence="1">Component of a multi-subunit COQ enzyme complex, composed of at least COQ3, COQ4, COQ5, COQ6, COQ7 and COQ9.</text>
</comment>
<comment type="subcellular location">
    <subcellularLocation>
        <location evidence="1">Mitochondrion inner membrane</location>
        <topology evidence="1">Peripheral membrane protein</topology>
        <orientation evidence="1">Matrix side</orientation>
    </subcellularLocation>
</comment>
<comment type="similarity">
    <text evidence="1">Belongs to the class I-like SAM-binding methyltransferase superfamily. MenG/UbiE family.</text>
</comment>
<protein>
    <recommendedName>
        <fullName evidence="1">2-methoxy-6-polyprenyl-1,4-benzoquinol methylase, mitochondrial</fullName>
        <ecNumber evidence="1">2.1.1.201</ecNumber>
    </recommendedName>
    <alternativeName>
        <fullName evidence="1">Ubiquinone biosynthesis methyltransferase COQ5</fullName>
    </alternativeName>
</protein>
<organism>
    <name type="scientific">Gallus gallus</name>
    <name type="common">Chicken</name>
    <dbReference type="NCBI Taxonomy" id="9031"/>
    <lineage>
        <taxon>Eukaryota</taxon>
        <taxon>Metazoa</taxon>
        <taxon>Chordata</taxon>
        <taxon>Craniata</taxon>
        <taxon>Vertebrata</taxon>
        <taxon>Euteleostomi</taxon>
        <taxon>Archelosauria</taxon>
        <taxon>Archosauria</taxon>
        <taxon>Dinosauria</taxon>
        <taxon>Saurischia</taxon>
        <taxon>Theropoda</taxon>
        <taxon>Coelurosauria</taxon>
        <taxon>Aves</taxon>
        <taxon>Neognathae</taxon>
        <taxon>Galloanserae</taxon>
        <taxon>Galliformes</taxon>
        <taxon>Phasianidae</taxon>
        <taxon>Phasianinae</taxon>
        <taxon>Gallus</taxon>
    </lineage>
</organism>
<feature type="transit peptide" description="Mitochondrion" evidence="1">
    <location>
        <begin position="1"/>
        <end position="29"/>
    </location>
</feature>
<feature type="chain" id="PRO_0000228632" description="2-methoxy-6-polyprenyl-1,4-benzoquinol methylase, mitochondrial">
    <location>
        <begin position="30"/>
        <end position="311"/>
    </location>
</feature>
<feature type="binding site" evidence="1">
    <location>
        <position position="100"/>
    </location>
    <ligand>
        <name>S-adenosyl-L-methionine</name>
        <dbReference type="ChEBI" id="CHEBI:59789"/>
    </ligand>
</feature>
<feature type="binding site" evidence="1">
    <location>
        <position position="155"/>
    </location>
    <ligand>
        <name>S-adenosyl-L-methionine</name>
        <dbReference type="ChEBI" id="CHEBI:59789"/>
    </ligand>
</feature>
<feature type="binding site" evidence="1">
    <location>
        <begin position="183"/>
        <end position="184"/>
    </location>
    <ligand>
        <name>S-adenosyl-L-methionine</name>
        <dbReference type="ChEBI" id="CHEBI:59789"/>
    </ligand>
</feature>
<name>COQ5_CHICK</name>
<proteinExistence type="evidence at transcript level"/>
<dbReference type="EC" id="2.1.1.201" evidence="1"/>
<dbReference type="EMBL" id="AJ719719">
    <property type="protein sequence ID" value="CAG31378.1"/>
    <property type="molecule type" value="mRNA"/>
</dbReference>
<dbReference type="RefSeq" id="NP_001006194.1">
    <property type="nucleotide sequence ID" value="NM_001006194.1"/>
</dbReference>
<dbReference type="SMR" id="Q5ZLL5"/>
<dbReference type="FunCoup" id="Q5ZLL5">
    <property type="interactions" value="1525"/>
</dbReference>
<dbReference type="STRING" id="9031.ENSGALP00000011621"/>
<dbReference type="PaxDb" id="9031-ENSGALP00000011621"/>
<dbReference type="GeneID" id="416975"/>
<dbReference type="KEGG" id="gga:416975"/>
<dbReference type="CTD" id="84274"/>
<dbReference type="VEuPathDB" id="HostDB:geneid_416975"/>
<dbReference type="eggNOG" id="KOG1540">
    <property type="taxonomic scope" value="Eukaryota"/>
</dbReference>
<dbReference type="InParanoid" id="Q5ZLL5"/>
<dbReference type="OMA" id="MNDVMSM"/>
<dbReference type="OrthoDB" id="6329284at2759"/>
<dbReference type="PhylomeDB" id="Q5ZLL5"/>
<dbReference type="UniPathway" id="UPA00232"/>
<dbReference type="PRO" id="PR:Q5ZLL5"/>
<dbReference type="Proteomes" id="UP000000539">
    <property type="component" value="Unassembled WGS sequence"/>
</dbReference>
<dbReference type="GO" id="GO:0031314">
    <property type="term" value="C:extrinsic component of mitochondrial inner membrane"/>
    <property type="evidence" value="ECO:0007669"/>
    <property type="project" value="UniProtKB-UniRule"/>
</dbReference>
<dbReference type="GO" id="GO:0008425">
    <property type="term" value="F:2-methoxy-6-polyprenyl-1,4-benzoquinol methyltransferase activity"/>
    <property type="evidence" value="ECO:0000250"/>
    <property type="project" value="UniProtKB"/>
</dbReference>
<dbReference type="GO" id="GO:0032259">
    <property type="term" value="P:methylation"/>
    <property type="evidence" value="ECO:0007669"/>
    <property type="project" value="UniProtKB-KW"/>
</dbReference>
<dbReference type="GO" id="GO:0006744">
    <property type="term" value="P:ubiquinone biosynthetic process"/>
    <property type="evidence" value="ECO:0000250"/>
    <property type="project" value="UniProtKB"/>
</dbReference>
<dbReference type="CDD" id="cd02440">
    <property type="entry name" value="AdoMet_MTases"/>
    <property type="match status" value="1"/>
</dbReference>
<dbReference type="FunFam" id="3.40.50.150:FF:000064">
    <property type="entry name" value="2-methoxy-6-polyprenyl-1,4-benzoquinol methylase, mitochondrial"/>
    <property type="match status" value="1"/>
</dbReference>
<dbReference type="Gene3D" id="3.40.50.150">
    <property type="entry name" value="Vaccinia Virus protein VP39"/>
    <property type="match status" value="1"/>
</dbReference>
<dbReference type="HAMAP" id="MF_01813">
    <property type="entry name" value="MenG_UbiE_methyltr"/>
    <property type="match status" value="1"/>
</dbReference>
<dbReference type="InterPro" id="IPR029063">
    <property type="entry name" value="SAM-dependent_MTases_sf"/>
</dbReference>
<dbReference type="InterPro" id="IPR004033">
    <property type="entry name" value="UbiE/COQ5_MeTrFase"/>
</dbReference>
<dbReference type="InterPro" id="IPR023576">
    <property type="entry name" value="UbiE/COQ5_MeTrFase_CS"/>
</dbReference>
<dbReference type="NCBIfam" id="TIGR01934">
    <property type="entry name" value="MenG_MenH_UbiE"/>
    <property type="match status" value="1"/>
</dbReference>
<dbReference type="PANTHER" id="PTHR43591:SF24">
    <property type="entry name" value="2-METHOXY-6-POLYPRENYL-1,4-BENZOQUINOL METHYLASE, MITOCHONDRIAL"/>
    <property type="match status" value="1"/>
</dbReference>
<dbReference type="PANTHER" id="PTHR43591">
    <property type="entry name" value="METHYLTRANSFERASE"/>
    <property type="match status" value="1"/>
</dbReference>
<dbReference type="Pfam" id="PF01209">
    <property type="entry name" value="Ubie_methyltran"/>
    <property type="match status" value="1"/>
</dbReference>
<dbReference type="SUPFAM" id="SSF53335">
    <property type="entry name" value="S-adenosyl-L-methionine-dependent methyltransferases"/>
    <property type="match status" value="1"/>
</dbReference>
<dbReference type="PROSITE" id="PS51608">
    <property type="entry name" value="SAM_MT_UBIE"/>
    <property type="match status" value="1"/>
</dbReference>
<dbReference type="PROSITE" id="PS01183">
    <property type="entry name" value="UBIE_1"/>
    <property type="match status" value="1"/>
</dbReference>
<dbReference type="PROSITE" id="PS01184">
    <property type="entry name" value="UBIE_2"/>
    <property type="match status" value="1"/>
</dbReference>
<gene>
    <name evidence="1" type="primary">COQ5</name>
    <name type="ORF">RCJMB04_5j20</name>
</gene>
<reference key="1">
    <citation type="journal article" date="2005" name="Genome Biol.">
        <title>Full-length cDNAs from chicken bursal lymphocytes to facilitate gene function analysis.</title>
        <authorList>
            <person name="Caldwell R.B."/>
            <person name="Kierzek A.M."/>
            <person name="Arakawa H."/>
            <person name="Bezzubov Y."/>
            <person name="Zaim J."/>
            <person name="Fiedler P."/>
            <person name="Kutter S."/>
            <person name="Blagodatski A."/>
            <person name="Kostovska D."/>
            <person name="Koter M."/>
            <person name="Plachy J."/>
            <person name="Carninci P."/>
            <person name="Hayashizaki Y."/>
            <person name="Buerstedde J.-M."/>
        </authorList>
    </citation>
    <scope>NUCLEOTIDE SEQUENCE [LARGE SCALE MRNA]</scope>
    <source>
        <strain>CB</strain>
        <tissue>Bursa of Fabricius</tissue>
    </source>
</reference>
<sequence>MAAGLCPGRALLSRRGGALWALLGTARGRAAGPETHFGFQNVSEAERREKIYQVFENVAEKYDVMNDSMSLGIHRVWKDILVHKMNPSPGTLLVDVAGGTGDIAFRFLNYVRSVRERQLQQKLRHHQNLSWQEISKSYQEEKSNPLGDSQVVVCDINKEMLKAGKQKAQHLGYSEGLSWVLGNAEELHFDDDKFDVYTIAFGIRNVTRIDLALQEAYRVLKPGGRFLCLEFSHVSNPLLSRLYDLYSFQVIPVLGEVIAGDWKSYQYLVESIRRFPPQEELKAMIEDAGFLKVDYQNLNSGIVAIHSGFKL</sequence>